<evidence type="ECO:0000255" key="1">
    <source>
        <dbReference type="HAMAP-Rule" id="MF_00211"/>
    </source>
</evidence>
<proteinExistence type="inferred from homology"/>
<reference key="1">
    <citation type="journal article" date="2009" name="PLoS Pathog.">
        <title>Molecular evolutionary consequences of niche restriction in Francisella tularensis, a facultative intracellular pathogen.</title>
        <authorList>
            <person name="Larsson P."/>
            <person name="Elfsmark D."/>
            <person name="Svensson K."/>
            <person name="Wikstroem P."/>
            <person name="Forsman M."/>
            <person name="Brettin T."/>
            <person name="Keim P."/>
            <person name="Johansson A."/>
        </authorList>
    </citation>
    <scope>NUCLEOTIDE SEQUENCE [LARGE SCALE GENOMIC DNA]</scope>
    <source>
        <strain>FSC147</strain>
    </source>
</reference>
<sequence>MISLKSIVDKLYNLEDLSYQESYQLFDYFIKGQIELPSQTSILTALKLKKETSIEIAAAVEALFDNTKEFPKIKGDLAGIVGTGGDGFNTINISTTAAIVAATAGYKVAKHGGRSVSSKSGSFDLLESFGVNIELAPDQTKQCLELYNLGFLFVPFYSDGFRHIKEARTILKTRTIFNILGPLINPARPNKVVIGVYSKDLILPMAKTLVNLGIDRAVVVYGSGLDEVAIHDDTYVAEIQNNQIIEYKVSPVDFGIDTYAIKDLEGGLPEQNREIIKQILLGKGKEAHNAAVAVNVAMLMKLYDKDDLKQNTQEVLEIIKSGKCFNTLQQVINYSNK</sequence>
<comment type="function">
    <text evidence="1">Catalyzes the transfer of the phosphoribosyl group of 5-phosphorylribose-1-pyrophosphate (PRPP) to anthranilate to yield N-(5'-phosphoribosyl)-anthranilate (PRA).</text>
</comment>
<comment type="catalytic activity">
    <reaction evidence="1">
        <text>N-(5-phospho-beta-D-ribosyl)anthranilate + diphosphate = 5-phospho-alpha-D-ribose 1-diphosphate + anthranilate</text>
        <dbReference type="Rhea" id="RHEA:11768"/>
        <dbReference type="ChEBI" id="CHEBI:16567"/>
        <dbReference type="ChEBI" id="CHEBI:18277"/>
        <dbReference type="ChEBI" id="CHEBI:33019"/>
        <dbReference type="ChEBI" id="CHEBI:58017"/>
        <dbReference type="EC" id="2.4.2.18"/>
    </reaction>
</comment>
<comment type="cofactor">
    <cofactor evidence="1">
        <name>Mg(2+)</name>
        <dbReference type="ChEBI" id="CHEBI:18420"/>
    </cofactor>
    <text evidence="1">Binds 2 magnesium ions per monomer.</text>
</comment>
<comment type="pathway">
    <text evidence="1">Amino-acid biosynthesis; L-tryptophan biosynthesis; L-tryptophan from chorismate: step 2/5.</text>
</comment>
<comment type="subunit">
    <text evidence="1">Homodimer.</text>
</comment>
<comment type="similarity">
    <text evidence="1">Belongs to the anthranilate phosphoribosyltransferase family.</text>
</comment>
<name>TRPD_FRATM</name>
<feature type="chain" id="PRO_1000099805" description="Anthranilate phosphoribosyltransferase">
    <location>
        <begin position="1"/>
        <end position="337"/>
    </location>
</feature>
<feature type="binding site" evidence="1">
    <location>
        <position position="82"/>
    </location>
    <ligand>
        <name>5-phospho-alpha-D-ribose 1-diphosphate</name>
        <dbReference type="ChEBI" id="CHEBI:58017"/>
    </ligand>
</feature>
<feature type="binding site" evidence="1">
    <location>
        <position position="82"/>
    </location>
    <ligand>
        <name>anthranilate</name>
        <dbReference type="ChEBI" id="CHEBI:16567"/>
        <label>1</label>
    </ligand>
</feature>
<feature type="binding site" evidence="1">
    <location>
        <begin position="85"/>
        <end position="86"/>
    </location>
    <ligand>
        <name>5-phospho-alpha-D-ribose 1-diphosphate</name>
        <dbReference type="ChEBI" id="CHEBI:58017"/>
    </ligand>
</feature>
<feature type="binding site" evidence="1">
    <location>
        <position position="90"/>
    </location>
    <ligand>
        <name>5-phospho-alpha-D-ribose 1-diphosphate</name>
        <dbReference type="ChEBI" id="CHEBI:58017"/>
    </ligand>
</feature>
<feature type="binding site" evidence="1">
    <location>
        <begin position="92"/>
        <end position="95"/>
    </location>
    <ligand>
        <name>5-phospho-alpha-D-ribose 1-diphosphate</name>
        <dbReference type="ChEBI" id="CHEBI:58017"/>
    </ligand>
</feature>
<feature type="binding site" evidence="1">
    <location>
        <position position="94"/>
    </location>
    <ligand>
        <name>Mg(2+)</name>
        <dbReference type="ChEBI" id="CHEBI:18420"/>
        <label>1</label>
    </ligand>
</feature>
<feature type="binding site" evidence="1">
    <location>
        <begin position="110"/>
        <end position="118"/>
    </location>
    <ligand>
        <name>5-phospho-alpha-D-ribose 1-diphosphate</name>
        <dbReference type="ChEBI" id="CHEBI:58017"/>
    </ligand>
</feature>
<feature type="binding site" evidence="1">
    <location>
        <position position="122"/>
    </location>
    <ligand>
        <name>5-phospho-alpha-D-ribose 1-diphosphate</name>
        <dbReference type="ChEBI" id="CHEBI:58017"/>
    </ligand>
</feature>
<feature type="binding site" evidence="1">
    <location>
        <position position="168"/>
    </location>
    <ligand>
        <name>anthranilate</name>
        <dbReference type="ChEBI" id="CHEBI:16567"/>
        <label>2</label>
    </ligand>
</feature>
<feature type="binding site" evidence="1">
    <location>
        <position position="226"/>
    </location>
    <ligand>
        <name>Mg(2+)</name>
        <dbReference type="ChEBI" id="CHEBI:18420"/>
        <label>2</label>
    </ligand>
</feature>
<feature type="binding site" evidence="1">
    <location>
        <position position="227"/>
    </location>
    <ligand>
        <name>Mg(2+)</name>
        <dbReference type="ChEBI" id="CHEBI:18420"/>
        <label>1</label>
    </ligand>
</feature>
<feature type="binding site" evidence="1">
    <location>
        <position position="227"/>
    </location>
    <ligand>
        <name>Mg(2+)</name>
        <dbReference type="ChEBI" id="CHEBI:18420"/>
        <label>2</label>
    </ligand>
</feature>
<organism>
    <name type="scientific">Francisella tularensis subsp. mediasiatica (strain FSC147)</name>
    <dbReference type="NCBI Taxonomy" id="441952"/>
    <lineage>
        <taxon>Bacteria</taxon>
        <taxon>Pseudomonadati</taxon>
        <taxon>Pseudomonadota</taxon>
        <taxon>Gammaproteobacteria</taxon>
        <taxon>Thiotrichales</taxon>
        <taxon>Francisellaceae</taxon>
        <taxon>Francisella</taxon>
    </lineage>
</organism>
<gene>
    <name evidence="1" type="primary">trpD</name>
    <name type="ordered locus">FTM_1750</name>
</gene>
<accession>B2SEF6</accession>
<dbReference type="EC" id="2.4.2.18" evidence="1"/>
<dbReference type="EMBL" id="CP000915">
    <property type="protein sequence ID" value="ACD31520.1"/>
    <property type="molecule type" value="Genomic_DNA"/>
</dbReference>
<dbReference type="SMR" id="B2SEF6"/>
<dbReference type="KEGG" id="ftm:FTM_1750"/>
<dbReference type="HOGENOM" id="CLU_034315_2_1_6"/>
<dbReference type="UniPathway" id="UPA00035">
    <property type="reaction ID" value="UER00041"/>
</dbReference>
<dbReference type="GO" id="GO:0005829">
    <property type="term" value="C:cytosol"/>
    <property type="evidence" value="ECO:0007669"/>
    <property type="project" value="TreeGrafter"/>
</dbReference>
<dbReference type="GO" id="GO:0004048">
    <property type="term" value="F:anthranilate phosphoribosyltransferase activity"/>
    <property type="evidence" value="ECO:0007669"/>
    <property type="project" value="UniProtKB-UniRule"/>
</dbReference>
<dbReference type="GO" id="GO:0000287">
    <property type="term" value="F:magnesium ion binding"/>
    <property type="evidence" value="ECO:0007669"/>
    <property type="project" value="UniProtKB-UniRule"/>
</dbReference>
<dbReference type="GO" id="GO:0000162">
    <property type="term" value="P:L-tryptophan biosynthetic process"/>
    <property type="evidence" value="ECO:0007669"/>
    <property type="project" value="UniProtKB-UniRule"/>
</dbReference>
<dbReference type="FunFam" id="3.40.1030.10:FF:000002">
    <property type="entry name" value="Anthranilate phosphoribosyltransferase"/>
    <property type="match status" value="1"/>
</dbReference>
<dbReference type="Gene3D" id="3.40.1030.10">
    <property type="entry name" value="Nucleoside phosphorylase/phosphoribosyltransferase catalytic domain"/>
    <property type="match status" value="1"/>
</dbReference>
<dbReference type="Gene3D" id="1.20.970.10">
    <property type="entry name" value="Transferase, Pyrimidine Nucleoside Phosphorylase, Chain C"/>
    <property type="match status" value="1"/>
</dbReference>
<dbReference type="HAMAP" id="MF_00211">
    <property type="entry name" value="TrpD"/>
    <property type="match status" value="1"/>
</dbReference>
<dbReference type="InterPro" id="IPR005940">
    <property type="entry name" value="Anthranilate_Pribosyl_Tfrase"/>
</dbReference>
<dbReference type="InterPro" id="IPR000312">
    <property type="entry name" value="Glycosyl_Trfase_fam3"/>
</dbReference>
<dbReference type="InterPro" id="IPR017459">
    <property type="entry name" value="Glycosyl_Trfase_fam3_N_dom"/>
</dbReference>
<dbReference type="InterPro" id="IPR036320">
    <property type="entry name" value="Glycosyl_Trfase_fam3_N_dom_sf"/>
</dbReference>
<dbReference type="InterPro" id="IPR035902">
    <property type="entry name" value="Nuc_phospho_transferase"/>
</dbReference>
<dbReference type="NCBIfam" id="TIGR01245">
    <property type="entry name" value="trpD"/>
    <property type="match status" value="1"/>
</dbReference>
<dbReference type="PANTHER" id="PTHR43285">
    <property type="entry name" value="ANTHRANILATE PHOSPHORIBOSYLTRANSFERASE"/>
    <property type="match status" value="1"/>
</dbReference>
<dbReference type="PANTHER" id="PTHR43285:SF2">
    <property type="entry name" value="ANTHRANILATE PHOSPHORIBOSYLTRANSFERASE"/>
    <property type="match status" value="1"/>
</dbReference>
<dbReference type="Pfam" id="PF02885">
    <property type="entry name" value="Glycos_trans_3N"/>
    <property type="match status" value="1"/>
</dbReference>
<dbReference type="Pfam" id="PF00591">
    <property type="entry name" value="Glycos_transf_3"/>
    <property type="match status" value="1"/>
</dbReference>
<dbReference type="SUPFAM" id="SSF52418">
    <property type="entry name" value="Nucleoside phosphorylase/phosphoribosyltransferase catalytic domain"/>
    <property type="match status" value="1"/>
</dbReference>
<dbReference type="SUPFAM" id="SSF47648">
    <property type="entry name" value="Nucleoside phosphorylase/phosphoribosyltransferase N-terminal domain"/>
    <property type="match status" value="1"/>
</dbReference>
<protein>
    <recommendedName>
        <fullName evidence="1">Anthranilate phosphoribosyltransferase</fullName>
        <ecNumber evidence="1">2.4.2.18</ecNumber>
    </recommendedName>
</protein>
<keyword id="KW-0028">Amino-acid biosynthesis</keyword>
<keyword id="KW-0057">Aromatic amino acid biosynthesis</keyword>
<keyword id="KW-0328">Glycosyltransferase</keyword>
<keyword id="KW-0460">Magnesium</keyword>
<keyword id="KW-0479">Metal-binding</keyword>
<keyword id="KW-0808">Transferase</keyword>
<keyword id="KW-0822">Tryptophan biosynthesis</keyword>